<name>ML149_PAPSO</name>
<gene>
    <name type="primary">MLP149</name>
</gene>
<comment type="function">
    <text>Not known; MLPs constitute up to 50% of the soluble latex protein.</text>
</comment>
<comment type="subcellular location">
    <subcellularLocation>
        <location>Vacuole</location>
    </subcellularLocation>
    <subcellularLocation>
        <location>Cytoplasmic vesicle</location>
    </subcellularLocation>
    <text>Central vacuole of developing laticifers and membrane-bound vesicles of mature cells.</text>
</comment>
<comment type="tissue specificity">
    <text>Laticifer.</text>
</comment>
<comment type="developmental stage">
    <text>MLPs accumulate early in laticifer development and persist through maturity.</text>
</comment>
<comment type="similarity">
    <text evidence="1">Belongs to the MLP family.</text>
</comment>
<evidence type="ECO:0000305" key="1"/>
<organism>
    <name type="scientific">Papaver somniferum</name>
    <name type="common">Opium poppy</name>
    <dbReference type="NCBI Taxonomy" id="3469"/>
    <lineage>
        <taxon>Eukaryota</taxon>
        <taxon>Viridiplantae</taxon>
        <taxon>Streptophyta</taxon>
        <taxon>Embryophyta</taxon>
        <taxon>Tracheophyta</taxon>
        <taxon>Spermatophyta</taxon>
        <taxon>Magnoliopsida</taxon>
        <taxon>Ranunculales</taxon>
        <taxon>Papaveraceae</taxon>
        <taxon>Papaveroideae</taxon>
        <taxon>Papaver</taxon>
    </lineage>
</organism>
<proteinExistence type="evidence at transcript level"/>
<accession>Q06395</accession>
<sequence>MAHTRGISGLVGKLVMETEVNCNADKYYQIYKHHEDLPSAIPHIVTSAKAVEGHGTTSGCVKEWGYMHEGKTLTCKEKTTYNDETRTICHSISEGDLMNDYKKFDATLVVDPKDNGHGSIVKYILDYEKINEDSPVPIHYLALCNQATEDLNTYLCASV</sequence>
<feature type="chain" id="PRO_0000210067" description="Major latex protein 149">
    <location>
        <begin position="1"/>
        <end position="159"/>
    </location>
</feature>
<dbReference type="EMBL" id="L06469">
    <property type="protein sequence ID" value="AAA19245.1"/>
    <property type="molecule type" value="Unassigned_DNA"/>
</dbReference>
<dbReference type="PIR" id="T09699">
    <property type="entry name" value="T09699"/>
</dbReference>
<dbReference type="SMR" id="Q06395"/>
<dbReference type="GO" id="GO:0031410">
    <property type="term" value="C:cytoplasmic vesicle"/>
    <property type="evidence" value="ECO:0007669"/>
    <property type="project" value="UniProtKB-KW"/>
</dbReference>
<dbReference type="GO" id="GO:0005773">
    <property type="term" value="C:vacuole"/>
    <property type="evidence" value="ECO:0007669"/>
    <property type="project" value="UniProtKB-SubCell"/>
</dbReference>
<dbReference type="GO" id="GO:0006952">
    <property type="term" value="P:defense response"/>
    <property type="evidence" value="ECO:0007669"/>
    <property type="project" value="InterPro"/>
</dbReference>
<dbReference type="Gene3D" id="3.30.530.20">
    <property type="match status" value="1"/>
</dbReference>
<dbReference type="InterPro" id="IPR000916">
    <property type="entry name" value="Bet_v_I/MLP"/>
</dbReference>
<dbReference type="InterPro" id="IPR052006">
    <property type="entry name" value="MLP-like"/>
</dbReference>
<dbReference type="InterPro" id="IPR023393">
    <property type="entry name" value="START-like_dom_sf"/>
</dbReference>
<dbReference type="PANTHER" id="PTHR31338">
    <property type="entry name" value="POLYKETIDE CYCLASE/DEHYDRASE AND LIPID TRANSPORT SUPERFAMILY PROTEIN"/>
    <property type="match status" value="1"/>
</dbReference>
<dbReference type="PANTHER" id="PTHR31338:SF16">
    <property type="entry name" value="POLYKETIDE CYCLASE_DEHYDRASE AND LIPID TRANSPORT SUPERFAMILY PROTEIN"/>
    <property type="match status" value="1"/>
</dbReference>
<dbReference type="Pfam" id="PF00407">
    <property type="entry name" value="Bet_v_1"/>
    <property type="match status" value="1"/>
</dbReference>
<dbReference type="SMART" id="SM01037">
    <property type="entry name" value="Bet_v_1"/>
    <property type="match status" value="1"/>
</dbReference>
<dbReference type="SUPFAM" id="SSF55961">
    <property type="entry name" value="Bet v1-like"/>
    <property type="match status" value="1"/>
</dbReference>
<keyword id="KW-0968">Cytoplasmic vesicle</keyword>
<keyword id="KW-0926">Vacuole</keyword>
<protein>
    <recommendedName>
        <fullName>Major latex protein 149</fullName>
        <shortName>MLP 149</shortName>
    </recommendedName>
</protein>
<reference key="1">
    <citation type="journal article" date="1994" name="Gene">
        <title>Sequence analysis of two new members of the major latex protein gene family supports the triploid-hybrid origin of the opium poppy.</title>
        <authorList>
            <person name="Nessler C.L."/>
        </authorList>
    </citation>
    <scope>NUCLEOTIDE SEQUENCE</scope>
    <source>
        <strain>cv. UNL186</strain>
    </source>
</reference>